<organism>
    <name type="scientific">Sinorhizobium fredii (strain NBRC 101917 / NGR234)</name>
    <dbReference type="NCBI Taxonomy" id="394"/>
    <lineage>
        <taxon>Bacteria</taxon>
        <taxon>Pseudomonadati</taxon>
        <taxon>Pseudomonadota</taxon>
        <taxon>Alphaproteobacteria</taxon>
        <taxon>Hyphomicrobiales</taxon>
        <taxon>Rhizobiaceae</taxon>
        <taxon>Sinorhizobium/Ensifer group</taxon>
        <taxon>Sinorhizobium</taxon>
    </lineage>
</organism>
<comment type="function">
    <text evidence="2">Acts to antagonize TraR-dependent activation.</text>
</comment>
<comment type="interaction">
    <interactant intactId="EBI-9014222">
        <id>P55408</id>
    </interactant>
    <interactant intactId="EBI-9014218">
        <id>P55407</id>
        <label>traR</label>
    </interactant>
    <organismsDiffer>false</organismsDiffer>
    <experiments>3</experiments>
</comment>
<comment type="similarity">
    <text evidence="2">To A.tumefaciens Ti plasmid TraM.</text>
</comment>
<sequence length="107" mass="12203">MNDMGSSEVNDENKEKEARYSVMTKSELEALAVSAIREHRRLLWADQAVYEEWLRASDDPSISGPVLQTLQDEYVARQKRSEAQQEELSDILDALGFVPDVPFDDDN</sequence>
<feature type="chain" id="PRO_0000065608" description="Probable transcriptional repressor TraM">
    <location>
        <begin position="1"/>
        <end position="107"/>
    </location>
</feature>
<feature type="region of interest" description="Disordered" evidence="1">
    <location>
        <begin position="1"/>
        <end position="20"/>
    </location>
</feature>
<feature type="turn" evidence="3">
    <location>
        <begin position="19"/>
        <end position="22"/>
    </location>
</feature>
<feature type="helix" evidence="3">
    <location>
        <begin position="25"/>
        <end position="56"/>
    </location>
</feature>
<feature type="helix" evidence="3">
    <location>
        <begin position="64"/>
        <end position="95"/>
    </location>
</feature>
<evidence type="ECO:0000256" key="1">
    <source>
        <dbReference type="SAM" id="MobiDB-lite"/>
    </source>
</evidence>
<evidence type="ECO:0000305" key="2"/>
<evidence type="ECO:0007829" key="3">
    <source>
        <dbReference type="PDB" id="2Q0O"/>
    </source>
</evidence>
<dbReference type="EMBL" id="U00090">
    <property type="protein sequence ID" value="AAB91638.1"/>
    <property type="molecule type" value="Genomic_DNA"/>
</dbReference>
<dbReference type="RefSeq" id="NP_443818.1">
    <property type="nucleotide sequence ID" value="NC_000914.2"/>
</dbReference>
<dbReference type="RefSeq" id="WP_010875418.1">
    <property type="nucleotide sequence ID" value="NC_000914.2"/>
</dbReference>
<dbReference type="PDB" id="2Q0O">
    <property type="method" value="X-ray"/>
    <property type="resolution" value="2.00 A"/>
    <property type="chains" value="C/D=1-107"/>
</dbReference>
<dbReference type="PDBsum" id="2Q0O"/>
<dbReference type="SMR" id="P55408"/>
<dbReference type="DIP" id="DIP-46220N"/>
<dbReference type="IntAct" id="P55408">
    <property type="interactions" value="1"/>
</dbReference>
<dbReference type="DrugBank" id="DB08081">
    <property type="generic name" value="3-OXO-OCTANOIC ACID (2-OXO-TETRAHYDRO-FURAN-3-YL)-AMIDE"/>
</dbReference>
<dbReference type="KEGG" id="rhi:NGR_a04080"/>
<dbReference type="PATRIC" id="fig|394.7.peg.429"/>
<dbReference type="eggNOG" id="ENOG502ZPB6">
    <property type="taxonomic scope" value="Bacteria"/>
</dbReference>
<dbReference type="HOGENOM" id="CLU_2247894_0_0_5"/>
<dbReference type="OrthoDB" id="8302520at2"/>
<dbReference type="EvolutionaryTrace" id="P55408"/>
<dbReference type="Proteomes" id="UP000001054">
    <property type="component" value="Plasmid pNGR234a"/>
</dbReference>
<dbReference type="GO" id="GO:0045892">
    <property type="term" value="P:negative regulation of DNA-templated transcription"/>
    <property type="evidence" value="ECO:0007669"/>
    <property type="project" value="InterPro"/>
</dbReference>
<dbReference type="Gene3D" id="1.10.287.160">
    <property type="entry name" value="HR1 repeat"/>
    <property type="match status" value="1"/>
</dbReference>
<dbReference type="InterPro" id="IPR015309">
    <property type="entry name" value="Tscrpt_rep_TraM"/>
</dbReference>
<dbReference type="InterPro" id="IPR036336">
    <property type="entry name" value="Tscrpt_rep_TraM_sf"/>
</dbReference>
<dbReference type="Pfam" id="PF09228">
    <property type="entry name" value="Prok-TraM"/>
    <property type="match status" value="1"/>
</dbReference>
<dbReference type="SUPFAM" id="SSF109631">
    <property type="entry name" value="Transcriptional repressor TraM"/>
    <property type="match status" value="1"/>
</dbReference>
<accession>P55408</accession>
<protein>
    <recommendedName>
        <fullName>Probable transcriptional repressor TraM</fullName>
    </recommendedName>
</protein>
<name>TRAM_SINFN</name>
<reference key="1">
    <citation type="journal article" date="1997" name="Nature">
        <title>Molecular basis of symbiosis between Rhizobium and legumes.</title>
        <authorList>
            <person name="Freiberg C.A."/>
            <person name="Fellay R."/>
            <person name="Bairoch A."/>
            <person name="Broughton W.J."/>
            <person name="Rosenthal A."/>
            <person name="Perret X."/>
        </authorList>
    </citation>
    <scope>NUCLEOTIDE SEQUENCE [LARGE SCALE GENOMIC DNA]</scope>
    <source>
        <strain>NBRC 101917 / NGR234</strain>
    </source>
</reference>
<reference key="2">
    <citation type="journal article" date="2009" name="Appl. Environ. Microbiol.">
        <title>Rhizobium sp. strain NGR234 possesses a remarkable number of secretion systems.</title>
        <authorList>
            <person name="Schmeisser C."/>
            <person name="Liesegang H."/>
            <person name="Krysciak D."/>
            <person name="Bakkou N."/>
            <person name="Le Quere A."/>
            <person name="Wollherr A."/>
            <person name="Heinemeyer I."/>
            <person name="Morgenstern B."/>
            <person name="Pommerening-Roeser A."/>
            <person name="Flores M."/>
            <person name="Palacios R."/>
            <person name="Brenner S."/>
            <person name="Gottschalk G."/>
            <person name="Schmitz R.A."/>
            <person name="Broughton W.J."/>
            <person name="Perret X."/>
            <person name="Strittmatter A.W."/>
            <person name="Streit W.R."/>
        </authorList>
    </citation>
    <scope>NUCLEOTIDE SEQUENCE [LARGE SCALE GENOMIC DNA]</scope>
    <source>
        <strain>NBRC 101917 / NGR234</strain>
    </source>
</reference>
<proteinExistence type="evidence at protein level"/>
<keyword id="KW-0002">3D-structure</keyword>
<keyword id="KW-0614">Plasmid</keyword>
<keyword id="KW-1185">Reference proteome</keyword>
<keyword id="KW-0678">Repressor</keyword>
<keyword id="KW-0804">Transcription</keyword>
<keyword id="KW-0805">Transcription regulation</keyword>
<gene>
    <name type="primary">traM</name>
    <name type="ordered locus">NGR_a04080</name>
    <name type="ORF">y4dI</name>
</gene>
<geneLocation type="plasmid">
    <name>sym pNGR234a</name>
</geneLocation>